<evidence type="ECO:0000255" key="1">
    <source>
        <dbReference type="HAMAP-Rule" id="MF_00644"/>
    </source>
</evidence>
<organism>
    <name type="scientific">Populus alba</name>
    <name type="common">White poplar</name>
    <dbReference type="NCBI Taxonomy" id="43335"/>
    <lineage>
        <taxon>Eukaryota</taxon>
        <taxon>Viridiplantae</taxon>
        <taxon>Streptophyta</taxon>
        <taxon>Embryophyta</taxon>
        <taxon>Tracheophyta</taxon>
        <taxon>Spermatophyta</taxon>
        <taxon>Magnoliopsida</taxon>
        <taxon>eudicotyledons</taxon>
        <taxon>Gunneridae</taxon>
        <taxon>Pentapetalae</taxon>
        <taxon>rosids</taxon>
        <taxon>fabids</taxon>
        <taxon>Malpighiales</taxon>
        <taxon>Salicaceae</taxon>
        <taxon>Saliceae</taxon>
        <taxon>Populus</taxon>
    </lineage>
</organism>
<accession>Q14FG0</accession>
<sequence>MTIAFQLAVFALIATSSILLISVPVVFSSPDGWSSNKNVVFSGTSLWIGLVFLVGILNSLIS</sequence>
<keyword id="KW-0150">Chloroplast</keyword>
<keyword id="KW-0472">Membrane</keyword>
<keyword id="KW-0602">Photosynthesis</keyword>
<keyword id="KW-0604">Photosystem II</keyword>
<keyword id="KW-0934">Plastid</keyword>
<keyword id="KW-0674">Reaction center</keyword>
<keyword id="KW-0793">Thylakoid</keyword>
<keyword id="KW-0812">Transmembrane</keyword>
<keyword id="KW-1133">Transmembrane helix</keyword>
<protein>
    <recommendedName>
        <fullName evidence="1">Photosystem II reaction center protein Z</fullName>
        <shortName evidence="1">PSII-Z</shortName>
    </recommendedName>
</protein>
<gene>
    <name evidence="1" type="primary">psbZ</name>
</gene>
<geneLocation type="chloroplast"/>
<proteinExistence type="inferred from homology"/>
<feature type="chain" id="PRO_0000277231" description="Photosystem II reaction center protein Z">
    <location>
        <begin position="1"/>
        <end position="62"/>
    </location>
</feature>
<feature type="transmembrane region" description="Helical" evidence="1">
    <location>
        <begin position="8"/>
        <end position="28"/>
    </location>
</feature>
<feature type="transmembrane region" description="Helical" evidence="1">
    <location>
        <begin position="41"/>
        <end position="61"/>
    </location>
</feature>
<name>PSBZ_POPAL</name>
<comment type="function">
    <text evidence="1">May control the interaction of photosystem II (PSII) cores with the light-harvesting antenna, regulates electron flow through the 2 photosystem reaction centers. PSII is a light-driven water plastoquinone oxidoreductase, using light energy to abstract electrons from H(2)O, generating a proton gradient subsequently used for ATP formation.</text>
</comment>
<comment type="subunit">
    <text evidence="1">PSII is composed of 1 copy each of membrane proteins PsbA, PsbB, PsbC, PsbD, PsbE, PsbF, PsbH, PsbI, PsbJ, PsbK, PsbL, PsbM, PsbT, PsbY, PsbZ, Psb30/Ycf12, at least 3 peripheral proteins of the oxygen-evolving complex and a large number of cofactors. It forms dimeric complexes.</text>
</comment>
<comment type="subcellular location">
    <subcellularLocation>
        <location evidence="1">Plastid</location>
        <location evidence="1">Chloroplast thylakoid membrane</location>
        <topology evidence="1">Multi-pass membrane protein</topology>
    </subcellularLocation>
</comment>
<comment type="similarity">
    <text evidence="1">Belongs to the PsbZ family.</text>
</comment>
<dbReference type="EMBL" id="AP008956">
    <property type="protein sequence ID" value="BAE97202.1"/>
    <property type="molecule type" value="Genomic_DNA"/>
</dbReference>
<dbReference type="RefSeq" id="YP_665555.1">
    <property type="nucleotide sequence ID" value="NC_008235.1"/>
</dbReference>
<dbReference type="SMR" id="Q14FG0"/>
<dbReference type="GeneID" id="4178207"/>
<dbReference type="KEGG" id="palz:4178207"/>
<dbReference type="OrthoDB" id="13697at3646"/>
<dbReference type="GO" id="GO:0009535">
    <property type="term" value="C:chloroplast thylakoid membrane"/>
    <property type="evidence" value="ECO:0007669"/>
    <property type="project" value="UniProtKB-SubCell"/>
</dbReference>
<dbReference type="GO" id="GO:0009539">
    <property type="term" value="C:photosystem II reaction center"/>
    <property type="evidence" value="ECO:0007669"/>
    <property type="project" value="InterPro"/>
</dbReference>
<dbReference type="GO" id="GO:0015979">
    <property type="term" value="P:photosynthesis"/>
    <property type="evidence" value="ECO:0007669"/>
    <property type="project" value="UniProtKB-UniRule"/>
</dbReference>
<dbReference type="GO" id="GO:0042549">
    <property type="term" value="P:photosystem II stabilization"/>
    <property type="evidence" value="ECO:0007669"/>
    <property type="project" value="InterPro"/>
</dbReference>
<dbReference type="FunFam" id="1.10.287.740:FF:000001">
    <property type="entry name" value="Photosystem II reaction center protein Z"/>
    <property type="match status" value="1"/>
</dbReference>
<dbReference type="Gene3D" id="1.10.287.740">
    <property type="entry name" value="Photosystem II PsbZ, reaction centre"/>
    <property type="match status" value="1"/>
</dbReference>
<dbReference type="HAMAP" id="MF_00644">
    <property type="entry name" value="PSII_PsbZ"/>
    <property type="match status" value="1"/>
</dbReference>
<dbReference type="InterPro" id="IPR002644">
    <property type="entry name" value="PSII_PsbZ"/>
</dbReference>
<dbReference type="InterPro" id="IPR036512">
    <property type="entry name" value="PSII_PsbZ_sf"/>
</dbReference>
<dbReference type="NCBIfam" id="TIGR03043">
    <property type="entry name" value="PS_II_psbZ"/>
    <property type="match status" value="1"/>
</dbReference>
<dbReference type="PANTHER" id="PTHR34971">
    <property type="entry name" value="PHOTOSYSTEM II REACTION CENTER PROTEIN Z"/>
    <property type="match status" value="1"/>
</dbReference>
<dbReference type="PANTHER" id="PTHR34971:SF2">
    <property type="entry name" value="PHOTOSYSTEM II REACTION CENTER PROTEIN Z"/>
    <property type="match status" value="1"/>
</dbReference>
<dbReference type="Pfam" id="PF01737">
    <property type="entry name" value="Ycf9"/>
    <property type="match status" value="1"/>
</dbReference>
<dbReference type="SUPFAM" id="SSF161055">
    <property type="entry name" value="PsbZ-like"/>
    <property type="match status" value="1"/>
</dbReference>
<reference key="1">
    <citation type="submission" date="2005-03" db="EMBL/GenBank/DDBJ databases">
        <title>Complete structure of the chloroplast genome of Populus alba.</title>
        <authorList>
            <person name="Okumura S."/>
            <person name="Yamashita A."/>
            <person name="Kanamoto H."/>
            <person name="Hattori M."/>
            <person name="Takase H."/>
            <person name="Tomizawa K."/>
        </authorList>
    </citation>
    <scope>NUCLEOTIDE SEQUENCE [LARGE SCALE GENOMIC DNA]</scope>
</reference>